<gene>
    <name evidence="1" type="primary">coaA</name>
    <name type="synonym">panK</name>
    <name type="ordered locus">SO_0215</name>
</gene>
<feature type="chain" id="PRO_0000194447" description="Pantothenate kinase">
    <location>
        <begin position="1"/>
        <end position="316"/>
    </location>
</feature>
<feature type="binding site" evidence="1">
    <location>
        <begin position="95"/>
        <end position="102"/>
    </location>
    <ligand>
        <name>ATP</name>
        <dbReference type="ChEBI" id="CHEBI:30616"/>
    </ligand>
</feature>
<evidence type="ECO:0000255" key="1">
    <source>
        <dbReference type="HAMAP-Rule" id="MF_00215"/>
    </source>
</evidence>
<keyword id="KW-0067">ATP-binding</keyword>
<keyword id="KW-0173">Coenzyme A biosynthesis</keyword>
<keyword id="KW-0963">Cytoplasm</keyword>
<keyword id="KW-0418">Kinase</keyword>
<keyword id="KW-0547">Nucleotide-binding</keyword>
<keyword id="KW-1185">Reference proteome</keyword>
<keyword id="KW-0808">Transferase</keyword>
<sequence>MTSKNPIQKALYLAFERAQWSVLRDAVPMTLSEQDLENLRGINEKVSLSEVTDIYLPLSRLLNLIVKAKQQRGLVLDEFLGQKPSSSPYIISLAGSVAVGKSTTARILQALLSQWPEHPKVDLVTTDGFLYPLADLKRKGLLQRKGFPESYDMKMLVEFISGVKSGQPHVNAPIYSHVTYDRIRGQHQTVSQPDILILEGLNVLQTGLDSPVDIRRPFVSDFVDFSIYVDAEEHLLKQWYQERFLQFRKGAFSDEKSYFHHYASLTDDEANTIAAKIWDTINGPNLQLNIQPTRERAHLILQKGQDHLMSHVLLRK</sequence>
<protein>
    <recommendedName>
        <fullName evidence="1">Pantothenate kinase</fullName>
        <ecNumber evidence="1">2.7.1.33</ecNumber>
    </recommendedName>
    <alternativeName>
        <fullName evidence="1">Pantothenic acid kinase</fullName>
    </alternativeName>
</protein>
<comment type="catalytic activity">
    <reaction evidence="1">
        <text>(R)-pantothenate + ATP = (R)-4'-phosphopantothenate + ADP + H(+)</text>
        <dbReference type="Rhea" id="RHEA:16373"/>
        <dbReference type="ChEBI" id="CHEBI:10986"/>
        <dbReference type="ChEBI" id="CHEBI:15378"/>
        <dbReference type="ChEBI" id="CHEBI:29032"/>
        <dbReference type="ChEBI" id="CHEBI:30616"/>
        <dbReference type="ChEBI" id="CHEBI:456216"/>
        <dbReference type="EC" id="2.7.1.33"/>
    </reaction>
</comment>
<comment type="pathway">
    <text evidence="1">Cofactor biosynthesis; coenzyme A biosynthesis; CoA from (R)-pantothenate: step 1/5.</text>
</comment>
<comment type="subcellular location">
    <subcellularLocation>
        <location evidence="1">Cytoplasm</location>
    </subcellularLocation>
</comment>
<comment type="similarity">
    <text evidence="1">Belongs to the prokaryotic pantothenate kinase family.</text>
</comment>
<accession>Q8EK83</accession>
<name>COAA_SHEON</name>
<reference key="1">
    <citation type="journal article" date="2002" name="Nat. Biotechnol.">
        <title>Genome sequence of the dissimilatory metal ion-reducing bacterium Shewanella oneidensis.</title>
        <authorList>
            <person name="Heidelberg J.F."/>
            <person name="Paulsen I.T."/>
            <person name="Nelson K.E."/>
            <person name="Gaidos E.J."/>
            <person name="Nelson W.C."/>
            <person name="Read T.D."/>
            <person name="Eisen J.A."/>
            <person name="Seshadri R."/>
            <person name="Ward N.L."/>
            <person name="Methe B.A."/>
            <person name="Clayton R.A."/>
            <person name="Meyer T."/>
            <person name="Tsapin A."/>
            <person name="Scott J."/>
            <person name="Beanan M.J."/>
            <person name="Brinkac L.M."/>
            <person name="Daugherty S.C."/>
            <person name="DeBoy R.T."/>
            <person name="Dodson R.J."/>
            <person name="Durkin A.S."/>
            <person name="Haft D.H."/>
            <person name="Kolonay J.F."/>
            <person name="Madupu R."/>
            <person name="Peterson J.D."/>
            <person name="Umayam L.A."/>
            <person name="White O."/>
            <person name="Wolf A.M."/>
            <person name="Vamathevan J.J."/>
            <person name="Weidman J.F."/>
            <person name="Impraim M."/>
            <person name="Lee K."/>
            <person name="Berry K.J."/>
            <person name="Lee C."/>
            <person name="Mueller J."/>
            <person name="Khouri H.M."/>
            <person name="Gill J."/>
            <person name="Utterback T.R."/>
            <person name="McDonald L.A."/>
            <person name="Feldblyum T.V."/>
            <person name="Smith H.O."/>
            <person name="Venter J.C."/>
            <person name="Nealson K.H."/>
            <person name="Fraser C.M."/>
        </authorList>
    </citation>
    <scope>NUCLEOTIDE SEQUENCE [LARGE SCALE GENOMIC DNA]</scope>
    <source>
        <strain>ATCC 700550 / JCM 31522 / CIP 106686 / LMG 19005 / NCIMB 14063 / MR-1</strain>
    </source>
</reference>
<proteinExistence type="inferred from homology"/>
<organism>
    <name type="scientific">Shewanella oneidensis (strain ATCC 700550 / JCM 31522 / CIP 106686 / LMG 19005 / NCIMB 14063 / MR-1)</name>
    <dbReference type="NCBI Taxonomy" id="211586"/>
    <lineage>
        <taxon>Bacteria</taxon>
        <taxon>Pseudomonadati</taxon>
        <taxon>Pseudomonadota</taxon>
        <taxon>Gammaproteobacteria</taxon>
        <taxon>Alteromonadales</taxon>
        <taxon>Shewanellaceae</taxon>
        <taxon>Shewanella</taxon>
    </lineage>
</organism>
<dbReference type="EC" id="2.7.1.33" evidence="1"/>
<dbReference type="EMBL" id="AE014299">
    <property type="protein sequence ID" value="AAN53300.1"/>
    <property type="molecule type" value="Genomic_DNA"/>
</dbReference>
<dbReference type="RefSeq" id="NP_715855.1">
    <property type="nucleotide sequence ID" value="NC_004347.2"/>
</dbReference>
<dbReference type="RefSeq" id="WP_011070603.1">
    <property type="nucleotide sequence ID" value="NC_004347.2"/>
</dbReference>
<dbReference type="SMR" id="Q8EK83"/>
<dbReference type="STRING" id="211586.SO_0215"/>
<dbReference type="PaxDb" id="211586-SO_0215"/>
<dbReference type="KEGG" id="son:SO_0215"/>
<dbReference type="PATRIC" id="fig|211586.12.peg.203"/>
<dbReference type="eggNOG" id="COG1072">
    <property type="taxonomic scope" value="Bacteria"/>
</dbReference>
<dbReference type="HOGENOM" id="CLU_053818_1_1_6"/>
<dbReference type="OrthoDB" id="1550976at2"/>
<dbReference type="PhylomeDB" id="Q8EK83"/>
<dbReference type="BioCyc" id="SONE211586:G1GMP-201-MONOMER"/>
<dbReference type="UniPathway" id="UPA00241">
    <property type="reaction ID" value="UER00352"/>
</dbReference>
<dbReference type="Proteomes" id="UP000008186">
    <property type="component" value="Chromosome"/>
</dbReference>
<dbReference type="GO" id="GO:0005737">
    <property type="term" value="C:cytoplasm"/>
    <property type="evidence" value="ECO:0000318"/>
    <property type="project" value="GO_Central"/>
</dbReference>
<dbReference type="GO" id="GO:0005524">
    <property type="term" value="F:ATP binding"/>
    <property type="evidence" value="ECO:0007669"/>
    <property type="project" value="UniProtKB-UniRule"/>
</dbReference>
<dbReference type="GO" id="GO:0004594">
    <property type="term" value="F:pantothenate kinase activity"/>
    <property type="evidence" value="ECO:0000318"/>
    <property type="project" value="GO_Central"/>
</dbReference>
<dbReference type="GO" id="GO:0015937">
    <property type="term" value="P:coenzyme A biosynthetic process"/>
    <property type="evidence" value="ECO:0000318"/>
    <property type="project" value="GO_Central"/>
</dbReference>
<dbReference type="CDD" id="cd02025">
    <property type="entry name" value="PanK"/>
    <property type="match status" value="1"/>
</dbReference>
<dbReference type="FunFam" id="3.40.50.300:FF:000242">
    <property type="entry name" value="Pantothenate kinase"/>
    <property type="match status" value="1"/>
</dbReference>
<dbReference type="Gene3D" id="3.40.50.300">
    <property type="entry name" value="P-loop containing nucleotide triphosphate hydrolases"/>
    <property type="match status" value="1"/>
</dbReference>
<dbReference type="HAMAP" id="MF_00215">
    <property type="entry name" value="Pantothen_kinase_1"/>
    <property type="match status" value="1"/>
</dbReference>
<dbReference type="InterPro" id="IPR027417">
    <property type="entry name" value="P-loop_NTPase"/>
</dbReference>
<dbReference type="InterPro" id="IPR004566">
    <property type="entry name" value="PanK"/>
</dbReference>
<dbReference type="InterPro" id="IPR006083">
    <property type="entry name" value="PRK/URK"/>
</dbReference>
<dbReference type="NCBIfam" id="TIGR00554">
    <property type="entry name" value="panK_bact"/>
    <property type="match status" value="1"/>
</dbReference>
<dbReference type="PANTHER" id="PTHR10285">
    <property type="entry name" value="URIDINE KINASE"/>
    <property type="match status" value="1"/>
</dbReference>
<dbReference type="Pfam" id="PF00485">
    <property type="entry name" value="PRK"/>
    <property type="match status" value="1"/>
</dbReference>
<dbReference type="PIRSF" id="PIRSF000545">
    <property type="entry name" value="Pantothenate_kin"/>
    <property type="match status" value="1"/>
</dbReference>
<dbReference type="SUPFAM" id="SSF52540">
    <property type="entry name" value="P-loop containing nucleoside triphosphate hydrolases"/>
    <property type="match status" value="1"/>
</dbReference>